<comment type="function">
    <text evidence="1">The aspartyl protease activity mediates proteolytic cleavages of Gag and Pol polyproteins. The reverse transcriptase (RT) activity converts the viral RNA genome into dsDNA in the cytoplasm, shortly after virus entry into the cell (early reverse transcription) or after proviral DNA transcription (late reverse transcription). RT consists of a DNA polymerase activity that can copy either DNA or RNA templates, and a ribonuclease H (RNase H) activity that cleaves the RNA strand of RNA-DNA heteroduplexes in a partially processive 3' to 5' endonucleasic mode. Conversion of viral genomic RNA into dsDNA requires many steps. A tRNA-Lys1,2 binds to the primer-binding site (PBS) situated at the 5'-end of the viral RNA. RT uses the 3' end of the tRNA primer to perform a short round of RNA-dependent minus-strand DNA synthesis. The reading proceeds through the U5 region and ends after the repeated (R) region which is present at both ends of viral RNA. The portion of the RNA-DNA heteroduplex is digested by the RNase H, resulting in a ssDNA product attached to the tRNA primer. This ssDNA/tRNA hybridizes with the identical R region situated at the 3' end of viral RNA. This template exchange, known as minus-strand DNA strong stop transfer, can be either intra- or intermolecular. RT uses the 3' end of this newly synthesized short ssDNA to perform the RNA-dependent minus-strand DNA synthesis of the whole template. RNase H digests the RNA template except for a polypurine tract (PPT) situated at the 5'-end and near the center of the genome. It is not clear if both polymerase and RNase H activities are simultaneous. RNase H probably can proceed both in a polymerase-dependent (RNA cut into small fragments by the same RT performing DNA synthesis) and a polymerase-independent mode (cleavage of remaining RNA fragments by free RTs). Secondly, RT performs DNA-directed plus-strand DNA synthesis using the PPT that has not been removed by RNase H as primer. PPT and tRNA primers are then removed by RNase H. The 3' and 5' ssDNA PBS regions hybridize to form a circular dsDNA intermediate. Strand displacement synthesis by RT to the PBS and PPT ends produces a blunt ended, linear dsDNA copy of the viral genome that includes long terminal repeats (LTRs) at both ends (By similarity).</text>
</comment>
<comment type="function">
    <text evidence="8">Integrase catalyzes viral DNA integration into the host chromosome, by performing a series of DNA cutting and joining reactions. This enzyme activity takes place after virion entry into a cell and reverse transcription of the RNA genome in dsDNA. The first step in the integration process is 3' processing. This step requires a complex comprising at least the viral genome, matrix protein, and integrase. This complex is called the pre-integration complex (PIC). The integrase protein removes 2 nucleotides from the 3' end of the viral DNA right (U5) end, leaving the left (U3) intact. In the second step, the PIC enters cell nucleus. This process is mediated through the integrase and allows the virus to infect both dividing (nuclear membrane disassembled) and G1/S-arrested cells (active translocation), but with no viral gene expression in the latter. In the third step, termed strand transfer, the integrase protein joins the previously processed 3' ends to the 5' ends of strands of target cellular DNA at the site of integration. It is however not clear how integration then proceeds to resolve the asymmetrical cleavage of viral DNA.</text>
</comment>
<comment type="catalytic activity">
    <reaction evidence="4">
        <text>Endonucleolytic cleavage to 5'-phosphomonoester.</text>
        <dbReference type="EC" id="3.1.26.4"/>
    </reaction>
</comment>
<comment type="catalytic activity">
    <reaction evidence="3">
        <text>DNA(n) + a 2'-deoxyribonucleoside 5'-triphosphate = DNA(n+1) + diphosphate</text>
        <dbReference type="Rhea" id="RHEA:22508"/>
        <dbReference type="Rhea" id="RHEA-COMP:17339"/>
        <dbReference type="Rhea" id="RHEA-COMP:17340"/>
        <dbReference type="ChEBI" id="CHEBI:33019"/>
        <dbReference type="ChEBI" id="CHEBI:61560"/>
        <dbReference type="ChEBI" id="CHEBI:173112"/>
        <dbReference type="EC" id="2.7.7.49"/>
    </reaction>
</comment>
<comment type="catalytic activity">
    <reaction evidence="3">
        <text>DNA(n) + a 2'-deoxyribonucleoside 5'-triphosphate = DNA(n+1) + diphosphate</text>
        <dbReference type="Rhea" id="RHEA:22508"/>
        <dbReference type="Rhea" id="RHEA-COMP:17339"/>
        <dbReference type="Rhea" id="RHEA-COMP:17340"/>
        <dbReference type="ChEBI" id="CHEBI:33019"/>
        <dbReference type="ChEBI" id="CHEBI:61560"/>
        <dbReference type="ChEBI" id="CHEBI:173112"/>
        <dbReference type="EC" id="2.7.7.7"/>
    </reaction>
</comment>
<comment type="cofactor">
    <cofactor evidence="1">
        <name>Mg(2+)</name>
        <dbReference type="ChEBI" id="CHEBI:18420"/>
    </cofactor>
    <text evidence="1">Binds 2 magnesium ions for reverse transcriptase polymerase activity.</text>
</comment>
<comment type="cofactor">
    <cofactor evidence="1">
        <name>Mg(2+)</name>
        <dbReference type="ChEBI" id="CHEBI:18420"/>
    </cofactor>
    <text evidence="1">Binds 2 magnesium ions for ribonuclease H (RNase H) activity. Substrate-binding is a precondition for magnesium binding.</text>
</comment>
<comment type="cofactor">
    <cofactor evidence="1">
        <name>Mg(2+)</name>
        <dbReference type="ChEBI" id="CHEBI:18420"/>
    </cofactor>
    <text evidence="1">Magnesium ions are required for integrase activity. Binds at least 1, maybe 2 magnesium ions.</text>
</comment>
<comment type="subunit">
    <text evidence="6">The protease is a homodimer, whose active site consists of two apposed aspartic acid residues.</text>
</comment>
<comment type="subcellular location">
    <molecule>Integrase</molecule>
    <subcellularLocation>
        <location evidence="9">Virion</location>
    </subcellularLocation>
    <subcellularLocation>
        <location evidence="1">Host nucleus</location>
    </subcellularLocation>
    <subcellularLocation>
        <location evidence="9">Host cytoplasm</location>
    </subcellularLocation>
    <text evidence="9">Nuclear at initial phase, cytoplasmic at assembly.</text>
</comment>
<comment type="subcellular location">
    <molecule>Protease/Reverse transcriptase/ribonuclease H</molecule>
    <subcellularLocation>
        <location evidence="1">Host nucleus</location>
    </subcellularLocation>
    <subcellularLocation>
        <location evidence="9">Host cytoplasm</location>
    </subcellularLocation>
    <text evidence="9">Nuclear at initial phase, cytoplasmic at assembly.</text>
</comment>
<comment type="domain">
    <text evidence="1">The reverse transcriptase/ribonuclease H (RT) is structured in five subdomains: finger, palm, thumb, connection and RNase H. Within the palm subdomain, the 'primer grip' region is thought to be involved in the positioning of the primer terminus for accommodating the incoming nucleotide. The RNase H domain stabilizes the association of RT with primer-template (By similarity).</text>
</comment>
<comment type="domain">
    <text evidence="1">Integrase core domain contains the D-x(n)-D-x(35)-E motif, named for the phylogenetically conserved glutamic acid and aspartic acid residues and the invariant 35 amino acid spacing between the second and third acidic residues. Each acidic residue of the D,D(35)E motif is independently essential for the 3'-processing and strand transfer activities of purified integrase protein (By similarity).</text>
</comment>
<comment type="PTM">
    <text>Specific enzymatic cleavages in vivo by viral protease yield mature proteins. The protease is not cleaved off from Pol. Since cleavage efficiency is not optimal for all sites, long and active p65Pro-RT, p87Pro-RT-RNaseH and even some Pr125Pol are detected in infected cells.</text>
</comment>
<comment type="miscellaneous">
    <text>The reverse transcriptase is an error-prone enzyme that lacks a proof-reading function. High mutations rate is a direct consequence of this characteristic. RT also displays frequent template switching leading to high recombination rate. Recombination mostly occurs between homologous regions of the two copackaged RNA genomes. If these two RNA molecules derive from different viral strains, reverse transcription will give rise to highly recombinated proviral DNAs.</text>
</comment>
<comment type="miscellaneous">
    <text>Foamy viruses are distinct from other retroviruses in many respects. Their protease is active as an uncleaved Pro-Pol protein. Mature particles do not include the usual processed retroviral structural protein (MA, CA and NC), but instead contain two large Gag proteins. Their functional nucleic acid appears to be either RNA or dsDNA (up to 20% of extracellular particles), because they probably proceed either to an early (before integration) or late reverse transcription (after assembly). Foamy viruses have the ability to retrotranspose intracellularly with high efficiency. They bud predominantly into the endoplasmic reticulum (ER) and occasionally at the plasma membrane. Budding requires the presence of Env proteins. Most viral particles probably remain within the infected cell.</text>
</comment>
<comment type="sequence caution" evidence="9">
    <conflict type="erroneous initiation">
        <sequence resource="EMBL-CDS" id="AAA47793"/>
    </conflict>
</comment>
<comment type="sequence caution" evidence="9">
    <conflict type="erroneous initiation">
        <sequence resource="EMBL-CDS" id="CAA41394"/>
    </conflict>
</comment>
<feature type="chain" id="PRO_0000125484" description="Pro-Pol polyprotein">
    <location>
        <begin position="1"/>
        <end position="1149"/>
    </location>
</feature>
<feature type="chain" id="PRO_0000245447" description="Protease/Reverse transcriptase/ribonuclease H" evidence="1">
    <location>
        <begin position="1"/>
        <end position="751"/>
    </location>
</feature>
<feature type="chain" id="PRO_0000245448" description="Protease/Reverse transcriptase" evidence="1">
    <location>
        <begin position="1"/>
        <end position="596"/>
    </location>
</feature>
<feature type="chain" id="PRO_0000245449" description="Ribonuclease H" evidence="1">
    <location>
        <begin position="597"/>
        <end position="751"/>
    </location>
</feature>
<feature type="chain" id="PRO_0000245450" description="Integrase" evidence="1">
    <location>
        <begin position="752"/>
        <end position="1149"/>
    </location>
</feature>
<feature type="domain" description="Peptidase A9" evidence="6">
    <location>
        <begin position="1"/>
        <end position="143"/>
    </location>
</feature>
<feature type="domain" description="Reverse transcriptase" evidence="3">
    <location>
        <begin position="186"/>
        <end position="363"/>
    </location>
</feature>
<feature type="domain" description="RNase H type-1" evidence="4">
    <location>
        <begin position="590"/>
        <end position="748"/>
    </location>
</feature>
<feature type="domain" description="Integrase catalytic" evidence="5">
    <location>
        <begin position="867"/>
        <end position="1023"/>
    </location>
</feature>
<feature type="region of interest" description="Disordered" evidence="7">
    <location>
        <begin position="1127"/>
        <end position="1149"/>
    </location>
</feature>
<feature type="compositionally biased region" description="Acidic residues" evidence="7">
    <location>
        <begin position="1139"/>
        <end position="1149"/>
    </location>
</feature>
<feature type="active site" description="For protease activity" evidence="6">
    <location>
        <position position="24"/>
    </location>
</feature>
<feature type="binding site" evidence="1">
    <location>
        <position position="252"/>
    </location>
    <ligand>
        <name>Mg(2+)</name>
        <dbReference type="ChEBI" id="CHEBI:18420"/>
        <label>1</label>
        <note>catalytic; for reverse transcriptase activity</note>
    </ligand>
</feature>
<feature type="binding site" evidence="1">
    <location>
        <position position="314"/>
    </location>
    <ligand>
        <name>Mg(2+)</name>
        <dbReference type="ChEBI" id="CHEBI:18420"/>
        <label>1</label>
        <note>catalytic; for reverse transcriptase activity</note>
    </ligand>
</feature>
<feature type="binding site" evidence="1">
    <location>
        <position position="315"/>
    </location>
    <ligand>
        <name>Mg(2+)</name>
        <dbReference type="ChEBI" id="CHEBI:18420"/>
        <label>1</label>
        <note>catalytic; for reverse transcriptase activity</note>
    </ligand>
</feature>
<feature type="binding site" evidence="1">
    <location>
        <position position="599"/>
    </location>
    <ligand>
        <name>Mg(2+)</name>
        <dbReference type="ChEBI" id="CHEBI:18420"/>
        <label>2</label>
        <note>catalytic; for RNase H activity</note>
    </ligand>
</feature>
<feature type="binding site" evidence="1">
    <location>
        <position position="646"/>
    </location>
    <ligand>
        <name>Mg(2+)</name>
        <dbReference type="ChEBI" id="CHEBI:18420"/>
        <label>2</label>
        <note>catalytic; for RNase H activity</note>
    </ligand>
</feature>
<feature type="binding site" evidence="1">
    <location>
        <position position="669"/>
    </location>
    <ligand>
        <name>Mg(2+)</name>
        <dbReference type="ChEBI" id="CHEBI:18420"/>
        <label>2</label>
        <note>catalytic; for RNase H activity</note>
    </ligand>
</feature>
<feature type="binding site" evidence="1">
    <location>
        <position position="740"/>
    </location>
    <ligand>
        <name>Mg(2+)</name>
        <dbReference type="ChEBI" id="CHEBI:18420"/>
        <label>2</label>
        <note>catalytic; for RNase H activity</note>
    </ligand>
</feature>
<feature type="binding site" evidence="1">
    <location>
        <position position="873"/>
    </location>
    <ligand>
        <name>Mg(2+)</name>
        <dbReference type="ChEBI" id="CHEBI:18420"/>
        <label>3</label>
        <note>catalytic; for integrase activity</note>
    </ligand>
</feature>
<feature type="binding site" evidence="1">
    <location>
        <position position="935"/>
    </location>
    <ligand>
        <name>Mg(2+)</name>
        <dbReference type="ChEBI" id="CHEBI:18420"/>
        <label>3</label>
        <note>catalytic; for integrase activity</note>
    </ligand>
</feature>
<feature type="site" description="Cleavage; by viral protease; partial" evidence="1">
    <location>
        <begin position="596"/>
        <end position="597"/>
    </location>
</feature>
<feature type="site" description="Cleavage; by viral protease" evidence="1">
    <location>
        <begin position="751"/>
        <end position="752"/>
    </location>
</feature>
<feature type="sequence conflict" description="In Ref. 2; CAA41394." evidence="9" ref="2">
    <original>T</original>
    <variation>I</variation>
    <location>
        <position position="224"/>
    </location>
</feature>
<feature type="sequence conflict" description="In Ref. 2; CAA41394." evidence="9" ref="2">
    <original>S</original>
    <variation>G</variation>
    <location>
        <position position="898"/>
    </location>
</feature>
<feature type="sequence conflict" description="In Ref. 2; CAA41394." evidence="9" ref="2">
    <original>A</original>
    <variation>T</variation>
    <location>
        <position position="938"/>
    </location>
</feature>
<feature type="strand" evidence="10">
    <location>
        <begin position="10"/>
        <end position="14"/>
    </location>
</feature>
<feature type="strand" evidence="10">
    <location>
        <begin position="17"/>
        <end position="23"/>
    </location>
</feature>
<feature type="strand" evidence="10">
    <location>
        <begin position="28"/>
        <end position="33"/>
    </location>
</feature>
<feature type="helix" evidence="10">
    <location>
        <begin position="34"/>
        <end position="36"/>
    </location>
</feature>
<feature type="turn" evidence="10">
    <location>
        <begin position="37"/>
        <end position="39"/>
    </location>
</feature>
<feature type="strand" evidence="10">
    <location>
        <begin position="43"/>
        <end position="49"/>
    </location>
</feature>
<feature type="strand" evidence="10">
    <location>
        <begin position="54"/>
        <end position="68"/>
    </location>
</feature>
<feature type="strand" evidence="10">
    <location>
        <begin position="70"/>
        <end position="85"/>
    </location>
</feature>
<feature type="turn" evidence="10">
    <location>
        <begin position="87"/>
        <end position="89"/>
    </location>
</feature>
<feature type="helix" evidence="10">
    <location>
        <begin position="91"/>
        <end position="94"/>
    </location>
</feature>
<reference key="1">
    <citation type="journal article" date="1991" name="Gene">
        <title>Sequence analysis of the simian foamy virus type 1 genome.</title>
        <authorList>
            <person name="Kupiec J.-J."/>
            <person name="Kay A."/>
            <person name="Hayat M."/>
            <person name="Ravier R."/>
            <person name="Peries J."/>
            <person name="Galibert F."/>
        </authorList>
    </citation>
    <scope>NUCLEOTIDE SEQUENCE [GENOMIC DNA]</scope>
</reference>
<reference key="2">
    <citation type="journal article" date="1991" name="Virology">
        <title>Replication and regulation of primate foamy viruses.</title>
        <authorList>
            <person name="Mergia A."/>
            <person name="Luciw P.A."/>
        </authorList>
    </citation>
    <scope>NUCLEOTIDE SEQUENCE [GENOMIC DNA] OF 1-958</scope>
</reference>
<reference key="3">
    <citation type="journal article" date="1990" name="J. Virol.">
        <title>Relationship of the env genes and the endonuclease domain of the pol genes of simian foamy virus type 1 and human foamy virus.</title>
        <authorList>
            <person name="Mergia A."/>
            <person name="Shaw K.E.S."/>
            <person name="Lackner J.E."/>
            <person name="Luciw P.A."/>
        </authorList>
    </citation>
    <scope>NUCLEOTIDE SEQUENCE [GENOMIC RNA] OF 957-1149</scope>
</reference>
<reference key="4">
    <citation type="journal article" date="2010" name="J. Virol.">
        <title>The foamy virus genome remains unintegrated in the nuclei of G1/S phase-arrested cells, and integrase is critical for preintegration complex transport into the nucleus.</title>
        <authorList>
            <person name="Lo Y.T."/>
            <person name="Tian T."/>
            <person name="Nadeau P.E."/>
            <person name="Park J."/>
            <person name="Mergia A."/>
        </authorList>
    </citation>
    <scope>FUNCTION OF INTEGRASE</scope>
</reference>
<reference key="5">
    <citation type="journal article" date="2003" name="Curr. Top. Microbiol. Immunol.">
        <title>Proteolytic processing of foamy virus Gag and Pol proteins.</title>
        <authorList>
            <person name="Fluegel R.M."/>
            <person name="Pfrepper K.-I."/>
        </authorList>
    </citation>
    <scope>REVIEW</scope>
</reference>
<sequence>MDPLQLLQPLEAEIKGTKLKAHWDSGATITCVPEAFLEDERPIQTMLIKTIHGEKQQDVYYLTFKVQGRKVEAEVLASPYDYILLNPSDVPWLMKKPLQLTVLVPLHEYQERLLQQTALPKEQKELLQKLFLKYDALWQHWENQVGHRRIKPHNIATGTLAPRPQKQYPINPKAKPSIQIVIDDLLKQGVLIQQNSTMNTPVYPVPKPDGKWRMVLDYREVNKTIPLIAAQNQHSAGILSSIYRGKYKTTLDLTNGFWAHPITPESYWLTAFTWQGKQYCWTRLPQGFLNSPALFTADVVDLLKEIPNVQAYVDDIYISHDDPQEHLEQLEKIFSILLNAGYVVSLKKSEIAQREVEFLGFNITKEGRGLTDTFKQKLLNITPPKDLKQLQSILGLLNFARNFIPNYSELVKPLYTIVANANGKFISWTEDNSNQLQHIISVLNQADNLEERNPETRLIIKVNSSPSAGYIRYYNEGSKRPIMYVNYIFSKAEAKFTQTEKLLTTMHKGLIKAMDLAMGQEILVYSPIVSMTKIQRTPLPERKALPVRWITWMTYLEDPRIQFHYDKSLPELQQIPNVTEDVIAKTKHPSEFAMVFYTDGSAIKHPDVNKSHSAGMGIAQVQFIPEYKIVHQWSIPLGDHTAQLAEIAAVEFACKKALKISGPVLIVTDSFYVAESANKELPYWKSNGFLNNKKKPLRHVSKWKSIAECLQLKPDIIIMHEKGHQQPMTTLHTEGNNLADKLATQGSYVVHCNTTPSLDAELDQLLQGHYPPGYPKQYKYTLEENKLIVERPNGIRIVPPKADREKIISTAHNIAHTGRDATFLKVSSKYWWPNLRKDVVKSIRQCKQCLVTNATNLTSPPILRPVKPLKPFDKFYIDYIGPLPPSNGYLHVLVVVDSMTGFVWLYPTKAPSTSATVKALNMLTSIAIPKVLHSDQGAAFTSSTFADWAKEKGIQLEFSTPYHPQSSGKVERKNSDIKRLLTKLLIGRPAKWYDLLPVVQLALNNSYSPSSKYTPHQLLFGVDSNTPFANSDTLDLSREEELSLLQEIRSSLHQPTSPPASSRSWSPSVGQLVQERVARPASLRPRWHKPTAILEVVNPRTVIILDHLGNRRTVSVDNLKLTAYQDNGTSNDSGTMALMEEDESSTSST</sequence>
<keyword id="KW-0002">3D-structure</keyword>
<keyword id="KW-0064">Aspartyl protease</keyword>
<keyword id="KW-0229">DNA integration</keyword>
<keyword id="KW-0233">DNA recombination</keyword>
<keyword id="KW-0239">DNA-directed DNA polymerase</keyword>
<keyword id="KW-0255">Endonuclease</keyword>
<keyword id="KW-1035">Host cytoplasm</keyword>
<keyword id="KW-1048">Host nucleus</keyword>
<keyword id="KW-0378">Hydrolase</keyword>
<keyword id="KW-0460">Magnesium</keyword>
<keyword id="KW-0479">Metal-binding</keyword>
<keyword id="KW-0511">Multifunctional enzyme</keyword>
<keyword id="KW-0540">Nuclease</keyword>
<keyword id="KW-0548">Nucleotidyltransferase</keyword>
<keyword id="KW-0645">Protease</keyword>
<keyword id="KW-0694">RNA-binding</keyword>
<keyword id="KW-0695">RNA-directed DNA polymerase</keyword>
<keyword id="KW-0808">Transferase</keyword>
<keyword id="KW-1179">Viral genome integration</keyword>
<keyword id="KW-1163">Viral penetration into host nucleus</keyword>
<keyword id="KW-0946">Virion</keyword>
<keyword id="KW-1160">Virus entry into host cell</keyword>
<gene>
    <name type="primary">pol</name>
</gene>
<protein>
    <recommendedName>
        <fullName>Pro-Pol polyprotein</fullName>
    </recommendedName>
    <alternativeName>
        <fullName>Pr125Pol</fullName>
    </alternativeName>
    <component>
        <recommendedName>
            <fullName>Protease/Reverse transcriptase/ribonuclease H</fullName>
            <ecNumber>2.7.7.49</ecNumber>
            <ecNumber>2.7.7.7</ecNumber>
            <ecNumber>3.1.26.4</ecNumber>
            <ecNumber>3.4.23.-</ecNumber>
        </recommendedName>
        <alternativeName>
            <fullName>p87Pro-RT-RNaseH</fullName>
        </alternativeName>
    </component>
    <component>
        <recommendedName>
            <fullName>Protease/Reverse transcriptase</fullName>
            <ecNumber>2.7.7.49</ecNumber>
            <ecNumber>2.7.7.7</ecNumber>
            <ecNumber>3.4.23.-</ecNumber>
        </recommendedName>
        <alternativeName>
            <fullName>p65Pro-RT</fullName>
        </alternativeName>
    </component>
    <component>
        <recommendedName>
            <fullName>Ribonuclease H</fullName>
            <shortName>RNase H</shortName>
            <ecNumber>3.1.26.4</ecNumber>
        </recommendedName>
    </component>
    <component>
        <recommendedName>
            <fullName>Integrase</fullName>
            <shortName>IN</shortName>
            <ecNumber evidence="2">2.7.7.-</ecNumber>
            <ecNumber evidence="2">3.1.-.-</ecNumber>
        </recommendedName>
        <alternativeName>
            <fullName>p42In</fullName>
        </alternativeName>
    </component>
</protein>
<accession>P23074</accession>
<dbReference type="EC" id="2.7.7.49"/>
<dbReference type="EC" id="2.7.7.7"/>
<dbReference type="EC" id="3.1.26.4"/>
<dbReference type="EC" id="3.4.23.-"/>
<dbReference type="EC" id="2.7.7.-" evidence="2"/>
<dbReference type="EC" id="3.1.-.-" evidence="2"/>
<dbReference type="EMBL" id="X54482">
    <property type="status" value="NOT_ANNOTATED_CDS"/>
    <property type="molecule type" value="Genomic_DNA"/>
</dbReference>
<dbReference type="EMBL" id="X58484">
    <property type="protein sequence ID" value="CAA41394.1"/>
    <property type="status" value="ALT_INIT"/>
    <property type="molecule type" value="Genomic_DNA"/>
</dbReference>
<dbReference type="EMBL" id="M33561">
    <property type="protein sequence ID" value="AAA47793.1"/>
    <property type="status" value="ALT_INIT"/>
    <property type="molecule type" value="Genomic_RNA"/>
</dbReference>
<dbReference type="PIR" id="A33562">
    <property type="entry name" value="A33562"/>
</dbReference>
<dbReference type="PIR" id="S15566">
    <property type="entry name" value="S15566"/>
</dbReference>
<dbReference type="RefSeq" id="YP_001961122.1">
    <property type="nucleotide sequence ID" value="NC_010819.1"/>
</dbReference>
<dbReference type="PDB" id="2JYS">
    <property type="method" value="NMR"/>
    <property type="chains" value="A=1-101"/>
</dbReference>
<dbReference type="PDBsum" id="2JYS"/>
<dbReference type="BMRB" id="P23074"/>
<dbReference type="SMR" id="P23074"/>
<dbReference type="MEROPS" id="A09.001"/>
<dbReference type="BRENDA" id="3.4.23.B11">
    <property type="organism ID" value="8746"/>
</dbReference>
<dbReference type="EvolutionaryTrace" id="P23074"/>
<dbReference type="Proteomes" id="UP000007216">
    <property type="component" value="Segment"/>
</dbReference>
<dbReference type="GO" id="GO:0043657">
    <property type="term" value="C:host cell"/>
    <property type="evidence" value="ECO:0007669"/>
    <property type="project" value="GOC"/>
</dbReference>
<dbReference type="GO" id="GO:0030430">
    <property type="term" value="C:host cell cytoplasm"/>
    <property type="evidence" value="ECO:0007669"/>
    <property type="project" value="UniProtKB-SubCell"/>
</dbReference>
<dbReference type="GO" id="GO:0042025">
    <property type="term" value="C:host cell nucleus"/>
    <property type="evidence" value="ECO:0007669"/>
    <property type="project" value="UniProtKB-SubCell"/>
</dbReference>
<dbReference type="GO" id="GO:0044423">
    <property type="term" value="C:virion component"/>
    <property type="evidence" value="ECO:0007669"/>
    <property type="project" value="UniProtKB-KW"/>
</dbReference>
<dbReference type="GO" id="GO:0004190">
    <property type="term" value="F:aspartic-type endopeptidase activity"/>
    <property type="evidence" value="ECO:0007669"/>
    <property type="project" value="UniProtKB-KW"/>
</dbReference>
<dbReference type="GO" id="GO:0003887">
    <property type="term" value="F:DNA-directed DNA polymerase activity"/>
    <property type="evidence" value="ECO:0007669"/>
    <property type="project" value="UniProtKB-KW"/>
</dbReference>
<dbReference type="GO" id="GO:0046872">
    <property type="term" value="F:metal ion binding"/>
    <property type="evidence" value="ECO:0007669"/>
    <property type="project" value="UniProtKB-KW"/>
</dbReference>
<dbReference type="GO" id="GO:0003723">
    <property type="term" value="F:RNA binding"/>
    <property type="evidence" value="ECO:0007669"/>
    <property type="project" value="UniProtKB-KW"/>
</dbReference>
<dbReference type="GO" id="GO:0003964">
    <property type="term" value="F:RNA-directed DNA polymerase activity"/>
    <property type="evidence" value="ECO:0007669"/>
    <property type="project" value="UniProtKB-KW"/>
</dbReference>
<dbReference type="GO" id="GO:0004523">
    <property type="term" value="F:RNA-DNA hybrid ribonuclease activity"/>
    <property type="evidence" value="ECO:0007669"/>
    <property type="project" value="UniProtKB-EC"/>
</dbReference>
<dbReference type="GO" id="GO:0015074">
    <property type="term" value="P:DNA integration"/>
    <property type="evidence" value="ECO:0007669"/>
    <property type="project" value="UniProtKB-KW"/>
</dbReference>
<dbReference type="GO" id="GO:0006310">
    <property type="term" value="P:DNA recombination"/>
    <property type="evidence" value="ECO:0007669"/>
    <property type="project" value="UniProtKB-KW"/>
</dbReference>
<dbReference type="GO" id="GO:0075713">
    <property type="term" value="P:establishment of integrated proviral latency"/>
    <property type="evidence" value="ECO:0007669"/>
    <property type="project" value="UniProtKB-KW"/>
</dbReference>
<dbReference type="GO" id="GO:0006508">
    <property type="term" value="P:proteolysis"/>
    <property type="evidence" value="ECO:0007669"/>
    <property type="project" value="UniProtKB-KW"/>
</dbReference>
<dbReference type="GO" id="GO:0046718">
    <property type="term" value="P:symbiont entry into host cell"/>
    <property type="evidence" value="ECO:0007669"/>
    <property type="project" value="UniProtKB-KW"/>
</dbReference>
<dbReference type="GO" id="GO:0044826">
    <property type="term" value="P:viral genome integration into host DNA"/>
    <property type="evidence" value="ECO:0007669"/>
    <property type="project" value="UniProtKB-KW"/>
</dbReference>
<dbReference type="GO" id="GO:0075732">
    <property type="term" value="P:viral penetration into host nucleus"/>
    <property type="evidence" value="ECO:0007669"/>
    <property type="project" value="UniProtKB-KW"/>
</dbReference>
<dbReference type="FunFam" id="3.30.420.10:FF:000263">
    <property type="entry name" value="Pro-Pol polyprotein"/>
    <property type="match status" value="1"/>
</dbReference>
<dbReference type="Gene3D" id="1.10.340.70">
    <property type="match status" value="1"/>
</dbReference>
<dbReference type="Gene3D" id="2.30.30.140">
    <property type="match status" value="1"/>
</dbReference>
<dbReference type="Gene3D" id="3.30.70.270">
    <property type="match status" value="2"/>
</dbReference>
<dbReference type="Gene3D" id="6.10.20.110">
    <property type="match status" value="1"/>
</dbReference>
<dbReference type="Gene3D" id="2.40.70.10">
    <property type="entry name" value="Acid Proteases"/>
    <property type="match status" value="1"/>
</dbReference>
<dbReference type="Gene3D" id="3.10.10.10">
    <property type="entry name" value="HIV Type 1 Reverse Transcriptase, subunit A, domain 1"/>
    <property type="match status" value="1"/>
</dbReference>
<dbReference type="Gene3D" id="3.30.420.10">
    <property type="entry name" value="Ribonuclease H-like superfamily/Ribonuclease H"/>
    <property type="match status" value="2"/>
</dbReference>
<dbReference type="InterPro" id="IPR043502">
    <property type="entry name" value="DNA/RNA_pol_sf"/>
</dbReference>
<dbReference type="InterPro" id="IPR001584">
    <property type="entry name" value="Integrase_cat-core"/>
</dbReference>
<dbReference type="InterPro" id="IPR041588">
    <property type="entry name" value="Integrase_H2C2"/>
</dbReference>
<dbReference type="InterPro" id="IPR021109">
    <property type="entry name" value="Peptidase_aspartic_dom_sf"/>
</dbReference>
<dbReference type="InterPro" id="IPR050951">
    <property type="entry name" value="Retrovirus_Pol_polyprotein"/>
</dbReference>
<dbReference type="InterPro" id="IPR043128">
    <property type="entry name" value="Rev_trsase/Diguanyl_cyclase"/>
</dbReference>
<dbReference type="InterPro" id="IPR012337">
    <property type="entry name" value="RNaseH-like_sf"/>
</dbReference>
<dbReference type="InterPro" id="IPR002156">
    <property type="entry name" value="RNaseH_domain"/>
</dbReference>
<dbReference type="InterPro" id="IPR036397">
    <property type="entry name" value="RNaseH_sf"/>
</dbReference>
<dbReference type="InterPro" id="IPR000477">
    <property type="entry name" value="RT_dom"/>
</dbReference>
<dbReference type="InterPro" id="IPR041577">
    <property type="entry name" value="RT_RNaseH_2"/>
</dbReference>
<dbReference type="InterPro" id="IPR040903">
    <property type="entry name" value="SH3_11"/>
</dbReference>
<dbReference type="InterPro" id="IPR001641">
    <property type="entry name" value="Spumavirus_A9"/>
</dbReference>
<dbReference type="PANTHER" id="PTHR37984">
    <property type="entry name" value="PROTEIN CBG26694"/>
    <property type="match status" value="1"/>
</dbReference>
<dbReference type="PANTHER" id="PTHR37984:SF5">
    <property type="entry name" value="PROTEIN NYNRIN-LIKE"/>
    <property type="match status" value="1"/>
</dbReference>
<dbReference type="Pfam" id="PF17921">
    <property type="entry name" value="Integrase_H2C2"/>
    <property type="match status" value="1"/>
</dbReference>
<dbReference type="Pfam" id="PF00075">
    <property type="entry name" value="RNase_H"/>
    <property type="match status" value="1"/>
</dbReference>
<dbReference type="Pfam" id="PF17919">
    <property type="entry name" value="RT_RNaseH_2"/>
    <property type="match status" value="1"/>
</dbReference>
<dbReference type="Pfam" id="PF00665">
    <property type="entry name" value="rve"/>
    <property type="match status" value="1"/>
</dbReference>
<dbReference type="Pfam" id="PF00078">
    <property type="entry name" value="RVT_1"/>
    <property type="match status" value="1"/>
</dbReference>
<dbReference type="Pfam" id="PF18103">
    <property type="entry name" value="SH3_11"/>
    <property type="match status" value="1"/>
</dbReference>
<dbReference type="Pfam" id="PF03539">
    <property type="entry name" value="Spuma_A9PTase"/>
    <property type="match status" value="1"/>
</dbReference>
<dbReference type="PRINTS" id="PR00920">
    <property type="entry name" value="SPUMVIRPTASE"/>
</dbReference>
<dbReference type="SUPFAM" id="SSF56672">
    <property type="entry name" value="DNA/RNA polymerases"/>
    <property type="match status" value="1"/>
</dbReference>
<dbReference type="SUPFAM" id="SSF53098">
    <property type="entry name" value="Ribonuclease H-like"/>
    <property type="match status" value="2"/>
</dbReference>
<dbReference type="PROSITE" id="PS51531">
    <property type="entry name" value="FV_PR"/>
    <property type="match status" value="1"/>
</dbReference>
<dbReference type="PROSITE" id="PS50994">
    <property type="entry name" value="INTEGRASE"/>
    <property type="match status" value="1"/>
</dbReference>
<dbReference type="PROSITE" id="PS50879">
    <property type="entry name" value="RNASE_H_1"/>
    <property type="match status" value="1"/>
</dbReference>
<dbReference type="PROSITE" id="PS50878">
    <property type="entry name" value="RT_POL"/>
    <property type="match status" value="1"/>
</dbReference>
<evidence type="ECO:0000250" key="1"/>
<evidence type="ECO:0000250" key="2">
    <source>
        <dbReference type="UniProtKB" id="Q87040"/>
    </source>
</evidence>
<evidence type="ECO:0000255" key="3">
    <source>
        <dbReference type="PROSITE-ProRule" id="PRU00405"/>
    </source>
</evidence>
<evidence type="ECO:0000255" key="4">
    <source>
        <dbReference type="PROSITE-ProRule" id="PRU00408"/>
    </source>
</evidence>
<evidence type="ECO:0000255" key="5">
    <source>
        <dbReference type="PROSITE-ProRule" id="PRU00457"/>
    </source>
</evidence>
<evidence type="ECO:0000255" key="6">
    <source>
        <dbReference type="PROSITE-ProRule" id="PRU00863"/>
    </source>
</evidence>
<evidence type="ECO:0000256" key="7">
    <source>
        <dbReference type="SAM" id="MobiDB-lite"/>
    </source>
</evidence>
<evidence type="ECO:0000269" key="8">
    <source>
    </source>
</evidence>
<evidence type="ECO:0000305" key="9"/>
<evidence type="ECO:0007829" key="10">
    <source>
        <dbReference type="PDB" id="2JYS"/>
    </source>
</evidence>
<name>POL_SFV1</name>
<proteinExistence type="evidence at protein level"/>
<organismHost>
    <name type="scientific">Homo sapiens</name>
    <name type="common">Human</name>
    <dbReference type="NCBI Taxonomy" id="9606"/>
</organismHost>
<organismHost>
    <name type="scientific">Macaca</name>
    <name type="common">macaques</name>
    <dbReference type="NCBI Taxonomy" id="9539"/>
</organismHost>
<organism>
    <name type="scientific">Simian foamy virus type 1</name>
    <name type="common">SFVmac</name>
    <name type="synonym">SFV-1</name>
    <dbReference type="NCBI Taxonomy" id="338478"/>
    <lineage>
        <taxon>Viruses</taxon>
        <taxon>Riboviria</taxon>
        <taxon>Pararnavirae</taxon>
        <taxon>Artverviricota</taxon>
        <taxon>Revtraviricetes</taxon>
        <taxon>Ortervirales</taxon>
        <taxon>Retroviridae</taxon>
        <taxon>Spumaretrovirinae</taxon>
        <taxon>Spumavirus</taxon>
    </lineage>
</organism>